<organism>
    <name type="scientific">Porphyromonas gingivalis (strain ATCC BAA-308 / W83)</name>
    <dbReference type="NCBI Taxonomy" id="242619"/>
    <lineage>
        <taxon>Bacteria</taxon>
        <taxon>Pseudomonadati</taxon>
        <taxon>Bacteroidota</taxon>
        <taxon>Bacteroidia</taxon>
        <taxon>Bacteroidales</taxon>
        <taxon>Porphyromonadaceae</taxon>
        <taxon>Porphyromonas</taxon>
    </lineage>
</organism>
<dbReference type="EC" id="3.4.22.37" evidence="3 5"/>
<dbReference type="EMBL" id="U85038">
    <property type="protein sequence ID" value="AAB41892.1"/>
    <property type="molecule type" value="Genomic_DNA"/>
</dbReference>
<dbReference type="EMBL" id="AF007124">
    <property type="protein sequence ID" value="AAC26371.1"/>
    <property type="molecule type" value="Genomic_DNA"/>
</dbReference>
<dbReference type="EMBL" id="AE015924">
    <property type="protein sequence ID" value="AAQ65700.1"/>
    <property type="molecule type" value="Genomic_DNA"/>
</dbReference>
<dbReference type="RefSeq" id="WP_010956050.1">
    <property type="nucleotide sequence ID" value="NC_002950.2"/>
</dbReference>
<dbReference type="PDB" id="1CVR">
    <property type="method" value="X-ray"/>
    <property type="resolution" value="2.00 A"/>
    <property type="chains" value="A=230-664"/>
</dbReference>
<dbReference type="PDB" id="4IEF">
    <property type="method" value="X-ray"/>
    <property type="resolution" value="2.30 A"/>
    <property type="chains" value="A/C/E/G=25-229, B/D/F/H=230-662"/>
</dbReference>
<dbReference type="PDB" id="5AG8">
    <property type="method" value="X-ray"/>
    <property type="resolution" value="1.90 A"/>
    <property type="chains" value="A/B=577-736"/>
</dbReference>
<dbReference type="PDB" id="5AG9">
    <property type="method" value="X-ray"/>
    <property type="resolution" value="2.11 A"/>
    <property type="chains" value="A/B=577-736"/>
</dbReference>
<dbReference type="PDB" id="5HFS">
    <property type="method" value="X-ray"/>
    <property type="resolution" value="1.97 A"/>
    <property type="chains" value="A/B=665-736"/>
</dbReference>
<dbReference type="PDB" id="7PQ4">
    <property type="method" value="NMR"/>
    <property type="chains" value="A=662-736"/>
</dbReference>
<dbReference type="PDBsum" id="1CVR"/>
<dbReference type="PDBsum" id="4IEF"/>
<dbReference type="PDBsum" id="5AG8"/>
<dbReference type="PDBsum" id="5AG9"/>
<dbReference type="PDBsum" id="5HFS"/>
<dbReference type="PDBsum" id="7PQ4"/>
<dbReference type="SMR" id="P95493"/>
<dbReference type="IntAct" id="P95493">
    <property type="interactions" value="1"/>
</dbReference>
<dbReference type="MINT" id="P95493"/>
<dbReference type="STRING" id="242619.PG_0506"/>
<dbReference type="MEROPS" id="C25.001"/>
<dbReference type="MEROPS" id="C25.003"/>
<dbReference type="EnsemblBacteria" id="AAQ65700">
    <property type="protein sequence ID" value="AAQ65700"/>
    <property type="gene ID" value="PG_0506"/>
</dbReference>
<dbReference type="KEGG" id="pgi:PG_0506"/>
<dbReference type="PATRIC" id="fig|242619.8.peg.464"/>
<dbReference type="eggNOG" id="COG2957">
    <property type="taxonomic scope" value="Bacteria"/>
</dbReference>
<dbReference type="HOGENOM" id="CLU_376783_0_0_10"/>
<dbReference type="BioCyc" id="PGIN242619:G1G02-466-MONOMER"/>
<dbReference type="BRENDA" id="3.4.22.37">
    <property type="organism ID" value="756"/>
</dbReference>
<dbReference type="SABIO-RK" id="P95493"/>
<dbReference type="EvolutionaryTrace" id="P95493"/>
<dbReference type="PHI-base" id="PHI:9710"/>
<dbReference type="Proteomes" id="UP000000588">
    <property type="component" value="Chromosome"/>
</dbReference>
<dbReference type="GO" id="GO:0005576">
    <property type="term" value="C:extracellular region"/>
    <property type="evidence" value="ECO:0000314"/>
    <property type="project" value="UniProtKB"/>
</dbReference>
<dbReference type="GO" id="GO:0005509">
    <property type="term" value="F:calcium ion binding"/>
    <property type="evidence" value="ECO:0000314"/>
    <property type="project" value="UniProtKB"/>
</dbReference>
<dbReference type="GO" id="GO:0004198">
    <property type="term" value="F:calcium-dependent cysteine-type endopeptidase activity"/>
    <property type="evidence" value="ECO:0000314"/>
    <property type="project" value="UniProtKB"/>
</dbReference>
<dbReference type="GO" id="GO:0006508">
    <property type="term" value="P:proteolysis"/>
    <property type="evidence" value="ECO:0000314"/>
    <property type="project" value="UniProtKB"/>
</dbReference>
<dbReference type="CDD" id="cd10913">
    <property type="entry name" value="Peptidase_C25_N_gingipain"/>
    <property type="match status" value="1"/>
</dbReference>
<dbReference type="FunFam" id="2.60.40.10:FF:002699">
    <property type="entry name" value="Gingipain R2"/>
    <property type="match status" value="1"/>
</dbReference>
<dbReference type="FunFam" id="3.40.50.1460:FF:000031">
    <property type="entry name" value="Gingipain R2"/>
    <property type="match status" value="1"/>
</dbReference>
<dbReference type="Gene3D" id="2.60.40.3800">
    <property type="match status" value="1"/>
</dbReference>
<dbReference type="Gene3D" id="3.40.50.1460">
    <property type="match status" value="1"/>
</dbReference>
<dbReference type="Gene3D" id="3.40.50.10390">
    <property type="entry name" value="Gingipain r, domain 1"/>
    <property type="match status" value="1"/>
</dbReference>
<dbReference type="Gene3D" id="2.60.40.10">
    <property type="entry name" value="Immunoglobulins"/>
    <property type="match status" value="1"/>
</dbReference>
<dbReference type="InterPro" id="IPR029030">
    <property type="entry name" value="Caspase-like_dom_sf"/>
</dbReference>
<dbReference type="InterPro" id="IPR001769">
    <property type="entry name" value="Gingipain"/>
</dbReference>
<dbReference type="InterPro" id="IPR039392">
    <property type="entry name" value="Gingipain_N"/>
</dbReference>
<dbReference type="InterPro" id="IPR029031">
    <property type="entry name" value="Gingipain_N_sf"/>
</dbReference>
<dbReference type="InterPro" id="IPR038490">
    <property type="entry name" value="Gingipain_propep_sf"/>
</dbReference>
<dbReference type="InterPro" id="IPR013783">
    <property type="entry name" value="Ig-like_fold"/>
</dbReference>
<dbReference type="InterPro" id="IPR014756">
    <property type="entry name" value="Ig_E-set"/>
</dbReference>
<dbReference type="InterPro" id="IPR041333">
    <property type="entry name" value="M60_C"/>
</dbReference>
<dbReference type="InterPro" id="IPR005536">
    <property type="entry name" value="Peptidase_C25_Ig-like_domain"/>
</dbReference>
<dbReference type="InterPro" id="IPR012600">
    <property type="entry name" value="Propeptide_C25"/>
</dbReference>
<dbReference type="InterPro" id="IPR026444">
    <property type="entry name" value="Secre_tail"/>
</dbReference>
<dbReference type="NCBIfam" id="TIGR04183">
    <property type="entry name" value="Por_Secre_tail"/>
    <property type="match status" value="1"/>
</dbReference>
<dbReference type="Pfam" id="PF01364">
    <property type="entry name" value="Peptidase_C25"/>
    <property type="match status" value="1"/>
</dbReference>
<dbReference type="Pfam" id="PF03785">
    <property type="entry name" value="Peptidase_C25_C"/>
    <property type="match status" value="1"/>
</dbReference>
<dbReference type="Pfam" id="PF18630">
    <property type="entry name" value="Peptidase_M60_C"/>
    <property type="match status" value="1"/>
</dbReference>
<dbReference type="Pfam" id="PF08126">
    <property type="entry name" value="Propeptide_C25"/>
    <property type="match status" value="1"/>
</dbReference>
<dbReference type="SUPFAM" id="SSF52129">
    <property type="entry name" value="Caspase-like"/>
    <property type="match status" value="1"/>
</dbReference>
<dbReference type="SUPFAM" id="SSF81296">
    <property type="entry name" value="E set domains"/>
    <property type="match status" value="1"/>
</dbReference>
<name>CPG2_PORGI</name>
<feature type="signal peptide" evidence="2">
    <location>
        <begin position="1"/>
        <end position="24"/>
    </location>
</feature>
<feature type="propeptide" id="PRO_0000026535" evidence="5">
    <location>
        <begin position="25"/>
        <end position="229"/>
    </location>
</feature>
<feature type="chain" id="PRO_0000026536" description="Gingipain R2">
    <location>
        <begin position="230"/>
        <end position="736"/>
    </location>
</feature>
<feature type="active site" description="Proton donor" evidence="9 10">
    <location>
        <position position="440"/>
    </location>
</feature>
<feature type="active site" description="Nucleophile" evidence="4 9 10">
    <location>
        <position position="473"/>
    </location>
</feature>
<feature type="binding site" evidence="10">
    <location>
        <position position="307"/>
    </location>
    <ligand>
        <name>Ca(2+)</name>
        <dbReference type="ChEBI" id="CHEBI:29108"/>
        <label>1</label>
    </ligand>
</feature>
<feature type="binding site" evidence="10 11">
    <location>
        <position position="329"/>
    </location>
    <ligand>
        <name>Ca(2+)</name>
        <dbReference type="ChEBI" id="CHEBI:29108"/>
        <label>2</label>
    </ligand>
</feature>
<feature type="binding site" evidence="10 11">
    <location>
        <position position="332"/>
    </location>
    <ligand>
        <name>Ca(2+)</name>
        <dbReference type="ChEBI" id="CHEBI:29108"/>
        <label>2</label>
    </ligand>
</feature>
<feature type="binding site" evidence="10 11">
    <location>
        <position position="334"/>
    </location>
    <ligand>
        <name>Ca(2+)</name>
        <dbReference type="ChEBI" id="CHEBI:29108"/>
        <label>2</label>
    </ligand>
</feature>
<feature type="binding site" evidence="10 11">
    <location>
        <position position="336"/>
    </location>
    <ligand>
        <name>Ca(2+)</name>
        <dbReference type="ChEBI" id="CHEBI:29108"/>
        <label>2</label>
    </ligand>
</feature>
<feature type="binding site" evidence="10">
    <location>
        <position position="390"/>
    </location>
    <ligand>
        <name>Ca(2+)</name>
        <dbReference type="ChEBI" id="CHEBI:29108"/>
        <label>3</label>
    </ligand>
</feature>
<feature type="binding site" evidence="10">
    <location>
        <position position="395"/>
    </location>
    <ligand>
        <name>Ca(2+)</name>
        <dbReference type="ChEBI" id="CHEBI:29108"/>
        <label>3</label>
    </ligand>
</feature>
<feature type="binding site" evidence="10">
    <location>
        <position position="478"/>
    </location>
    <ligand>
        <name>Ca(2+)</name>
        <dbReference type="ChEBI" id="CHEBI:29108"/>
        <label>1</label>
    </ligand>
</feature>
<feature type="binding site" evidence="10">
    <location>
        <position position="487"/>
    </location>
    <ligand>
        <name>Ca(2+)</name>
        <dbReference type="ChEBI" id="CHEBI:29108"/>
        <label>1</label>
    </ligand>
</feature>
<feature type="binding site" evidence="10">
    <location>
        <position position="521"/>
    </location>
    <ligand>
        <name>Ca(2+)</name>
        <dbReference type="ChEBI" id="CHEBI:29108"/>
        <label>3</label>
    </ligand>
</feature>
<feature type="binding site" evidence="10">
    <location>
        <position position="522"/>
    </location>
    <ligand>
        <name>Ca(2+)</name>
        <dbReference type="ChEBI" id="CHEBI:29108"/>
        <label>4</label>
    </ligand>
</feature>
<feature type="binding site" evidence="10">
    <location>
        <position position="525"/>
    </location>
    <ligand>
        <name>Ca(2+)</name>
        <dbReference type="ChEBI" id="CHEBI:29108"/>
        <label>4</label>
    </ligand>
</feature>
<feature type="binding site" evidence="10">
    <location>
        <position position="531"/>
    </location>
    <ligand>
        <name>Ca(2+)</name>
        <dbReference type="ChEBI" id="CHEBI:29108"/>
        <label>4</label>
    </ligand>
</feature>
<feature type="binding site" evidence="11">
    <location>
        <position position="613"/>
    </location>
    <ligand>
        <name>Ca(2+)</name>
        <dbReference type="ChEBI" id="CHEBI:29108"/>
        <label>5</label>
    </ligand>
</feature>
<feature type="binding site" evidence="11">
    <location>
        <position position="639"/>
    </location>
    <ligand>
        <name>Ca(2+)</name>
        <dbReference type="ChEBI" id="CHEBI:29108"/>
        <label>5</label>
    </ligand>
</feature>
<feature type="sequence conflict" description="In Ref. 1; AAB41892." evidence="8" ref="1">
    <original>G</original>
    <variation>D</variation>
    <location>
        <position position="58"/>
    </location>
</feature>
<feature type="sequence conflict" description="In Ref. 1; AAB41892." evidence="8" ref="1">
    <original>P</original>
    <variation>A</variation>
    <location>
        <position position="246"/>
    </location>
</feature>
<feature type="sequence conflict" description="In Ref. 1; AAB41892." evidence="8" ref="1">
    <original>E</original>
    <variation>G</variation>
    <location>
        <position position="251"/>
    </location>
</feature>
<feature type="sequence conflict" description="In Ref. 1; AAB41892." evidence="8" ref="1">
    <original>E</original>
    <variation>K</variation>
    <location>
        <position position="254"/>
    </location>
</feature>
<feature type="sequence conflict" description="In Ref. 1; AAB41892." evidence="8" ref="1">
    <original>I</original>
    <variation>V</variation>
    <location>
        <position position="398"/>
    </location>
</feature>
<feature type="sequence conflict" description="In Ref. 1; AAB41892." evidence="8" ref="1">
    <original>A</original>
    <variation>V</variation>
    <location>
        <position position="435"/>
    </location>
</feature>
<feature type="sequence conflict" description="In Ref. 1; AAB41892." evidence="8" ref="1">
    <original>YNV</original>
    <variation>FSM</variation>
    <location>
        <begin position="480"/>
        <end position="482"/>
    </location>
</feature>
<feature type="sequence conflict" description="In Ref. 1; AA sequence." evidence="8" ref="1">
    <original>N</original>
    <variation>D</variation>
    <location>
        <position position="510"/>
    </location>
</feature>
<feature type="sequence conflict" description="In Ref. 1; AA sequence." evidence="8" ref="1">
    <original>S</original>
    <variation>Y</variation>
    <location>
        <position position="512"/>
    </location>
</feature>
<feature type="sequence conflict" description="In Ref. 1; AA sequence." evidence="8" ref="1">
    <original>S</original>
    <variation>P</variation>
    <location>
        <position position="515"/>
    </location>
</feature>
<feature type="sequence conflict" description="In Ref. 1; AAB41892." evidence="8" ref="1">
    <original>K</original>
    <variation>N</variation>
    <location>
        <position position="560"/>
    </location>
</feature>
<feature type="sequence conflict" description="In Ref. 1; AAB41892." evidence="8" ref="1">
    <original>K</original>
    <variation>E</variation>
    <location>
        <position position="582"/>
    </location>
</feature>
<feature type="strand" evidence="16">
    <location>
        <begin position="36"/>
        <end position="41"/>
    </location>
</feature>
<feature type="strand" evidence="16">
    <location>
        <begin position="44"/>
        <end position="50"/>
    </location>
</feature>
<feature type="strand" evidence="16">
    <location>
        <begin position="55"/>
        <end position="61"/>
    </location>
</feature>
<feature type="strand" evidence="16">
    <location>
        <begin position="64"/>
        <end position="70"/>
    </location>
</feature>
<feature type="strand" evidence="16">
    <location>
        <begin position="87"/>
        <end position="93"/>
    </location>
</feature>
<feature type="strand" evidence="16">
    <location>
        <begin position="96"/>
        <end position="112"/>
    </location>
</feature>
<feature type="helix" evidence="16">
    <location>
        <begin position="130"/>
        <end position="132"/>
    </location>
</feature>
<feature type="helix" evidence="16">
    <location>
        <begin position="139"/>
        <end position="142"/>
    </location>
</feature>
<feature type="strand" evidence="16">
    <location>
        <begin position="151"/>
        <end position="154"/>
    </location>
</feature>
<feature type="strand" evidence="16">
    <location>
        <begin position="158"/>
        <end position="160"/>
    </location>
</feature>
<feature type="strand" evidence="16">
    <location>
        <begin position="163"/>
        <end position="170"/>
    </location>
</feature>
<feature type="strand" evidence="16">
    <location>
        <begin position="173"/>
        <end position="176"/>
    </location>
</feature>
<feature type="turn" evidence="16">
    <location>
        <begin position="177"/>
        <end position="180"/>
    </location>
</feature>
<feature type="strand" evidence="16">
    <location>
        <begin position="181"/>
        <end position="198"/>
    </location>
</feature>
<feature type="helix" evidence="16">
    <location>
        <begin position="215"/>
        <end position="221"/>
    </location>
</feature>
<feature type="strand" evidence="15">
    <location>
        <begin position="240"/>
        <end position="245"/>
    </location>
</feature>
<feature type="helix" evidence="15">
    <location>
        <begin position="247"/>
        <end position="252"/>
    </location>
</feature>
<feature type="helix" evidence="15">
    <location>
        <begin position="254"/>
        <end position="262"/>
    </location>
</feature>
<feature type="strand" evidence="15">
    <location>
        <begin position="266"/>
        <end position="271"/>
    </location>
</feature>
<feature type="helix" evidence="15">
    <location>
        <begin position="272"/>
        <end position="275"/>
    </location>
</feature>
<feature type="helix" evidence="15">
    <location>
        <begin position="281"/>
        <end position="293"/>
    </location>
</feature>
<feature type="strand" evidence="15">
    <location>
        <begin position="299"/>
        <end position="306"/>
    </location>
</feature>
<feature type="turn" evidence="15">
    <location>
        <begin position="308"/>
        <end position="310"/>
    </location>
</feature>
<feature type="strand" evidence="15">
    <location>
        <begin position="314"/>
        <end position="316"/>
    </location>
</feature>
<feature type="strand" evidence="15">
    <location>
        <begin position="319"/>
        <end position="322"/>
    </location>
</feature>
<feature type="helix" evidence="15">
    <location>
        <begin position="323"/>
        <end position="326"/>
    </location>
</feature>
<feature type="strand" evidence="15">
    <location>
        <begin position="329"/>
        <end position="333"/>
    </location>
</feature>
<feature type="strand" evidence="15">
    <location>
        <begin position="336"/>
        <end position="342"/>
    </location>
</feature>
<feature type="helix" evidence="15">
    <location>
        <begin position="347"/>
        <end position="362"/>
    </location>
</feature>
<feature type="turn" evidence="15">
    <location>
        <begin position="369"/>
        <end position="372"/>
    </location>
</feature>
<feature type="strand" evidence="15">
    <location>
        <begin position="373"/>
        <end position="378"/>
    </location>
</feature>
<feature type="helix" evidence="15">
    <location>
        <begin position="387"/>
        <end position="389"/>
    </location>
</feature>
<feature type="helix" evidence="15">
    <location>
        <begin position="392"/>
        <end position="406"/>
    </location>
</feature>
<feature type="strand" evidence="15">
    <location>
        <begin position="409"/>
        <end position="418"/>
    </location>
</feature>
<feature type="helix" evidence="15">
    <location>
        <begin position="421"/>
        <end position="430"/>
    </location>
</feature>
<feature type="strand" evidence="15">
    <location>
        <begin position="433"/>
        <end position="439"/>
    </location>
</feature>
<feature type="strand" evidence="15">
    <location>
        <begin position="443"/>
        <end position="446"/>
    </location>
</feature>
<feature type="turn" evidence="15">
    <location>
        <begin position="447"/>
        <end position="449"/>
    </location>
</feature>
<feature type="turn" evidence="15">
    <location>
        <begin position="453"/>
        <end position="455"/>
    </location>
</feature>
<feature type="helix" evidence="15">
    <location>
        <begin position="456"/>
        <end position="458"/>
    </location>
</feature>
<feature type="strand" evidence="15">
    <location>
        <begin position="467"/>
        <end position="474"/>
    </location>
</feature>
<feature type="strand" evidence="15">
    <location>
        <begin position="480"/>
        <end position="482"/>
    </location>
</feature>
<feature type="helix" evidence="15">
    <location>
        <begin position="485"/>
        <end position="491"/>
    </location>
</feature>
<feature type="strand" evidence="15">
    <location>
        <begin position="502"/>
        <end position="509"/>
    </location>
</feature>
<feature type="strand" evidence="16">
    <location>
        <begin position="512"/>
        <end position="514"/>
    </location>
</feature>
<feature type="helix" evidence="15">
    <location>
        <begin position="515"/>
        <end position="527"/>
    </location>
</feature>
<feature type="helix" evidence="16">
    <location>
        <begin position="535"/>
        <end position="537"/>
    </location>
</feature>
<feature type="helix" evidence="15">
    <location>
        <begin position="539"/>
        <end position="564"/>
    </location>
</feature>
<feature type="strand" evidence="15">
    <location>
        <begin position="565"/>
        <end position="569"/>
    </location>
</feature>
<feature type="strand" evidence="17">
    <location>
        <begin position="589"/>
        <end position="592"/>
    </location>
</feature>
<feature type="strand" evidence="17">
    <location>
        <begin position="596"/>
        <end position="604"/>
    </location>
</feature>
<feature type="strand" evidence="17">
    <location>
        <begin position="608"/>
        <end position="613"/>
    </location>
</feature>
<feature type="strand" evidence="17">
    <location>
        <begin position="616"/>
        <end position="622"/>
    </location>
</feature>
<feature type="strand" evidence="17">
    <location>
        <begin position="627"/>
        <end position="631"/>
    </location>
</feature>
<feature type="strand" evidence="17">
    <location>
        <begin position="640"/>
        <end position="647"/>
    </location>
</feature>
<feature type="strand" evidence="17">
    <location>
        <begin position="654"/>
        <end position="661"/>
    </location>
</feature>
<feature type="strand" evidence="17">
    <location>
        <begin position="675"/>
        <end position="679"/>
    </location>
</feature>
<feature type="strand" evidence="17">
    <location>
        <begin position="682"/>
        <end position="695"/>
    </location>
</feature>
<feature type="strand" evidence="17">
    <location>
        <begin position="701"/>
        <end position="712"/>
    </location>
</feature>
<feature type="strand" evidence="17">
    <location>
        <begin position="715"/>
        <end position="724"/>
    </location>
</feature>
<feature type="strand" evidence="17">
    <location>
        <begin position="727"/>
        <end position="735"/>
    </location>
</feature>
<gene>
    <name type="primary">rgpB</name>
    <name type="synonym">prtRII</name>
    <name type="synonym">rgp2</name>
    <name type="ordered locus">PG_0506</name>
</gene>
<keyword id="KW-0002">3D-structure</keyword>
<keyword id="KW-0106">Calcium</keyword>
<keyword id="KW-0903">Direct protein sequencing</keyword>
<keyword id="KW-0378">Hydrolase</keyword>
<keyword id="KW-0479">Metal-binding</keyword>
<keyword id="KW-0645">Protease</keyword>
<keyword id="KW-1185">Reference proteome</keyword>
<keyword id="KW-0964">Secreted</keyword>
<keyword id="KW-0732">Signal</keyword>
<keyword id="KW-0788">Thiol protease</keyword>
<keyword id="KW-0843">Virulence</keyword>
<keyword id="KW-0865">Zymogen</keyword>
<sequence>MKKNFSRIVSIVAFSSLLGGMAFAQPAERGRNPQVRLLSAEQSMSKVQFRMDNLQFTGVQTSKGVAQVPTFTEGVNISEKGTPILPILSRSLAVSETRAMKVEVVSSKFIEKKDVLIAPSKGVISRAENPDQIPYVYGQSYNEDKFFPGEIATLSDPFILRDVRGQVVNFAPLQYNPVTKTLRIYTEIVVAVSETAEAGQNTISLVKNSTFTGFEDIYKSVFMNYEATRYTPVEEKENGRMIVIVPKKYEEDIEDFVDWKNQRGLRTEVKVAEDIASPVTANAIQQFVKQEYEKEGNDLTYVLLVGDHKDIPAKITPGIKSDQVYGQIVGNDHYNEVFIGRFSCESKEDLKTQIDRTIHYERNITTEDKWLGQALCIASAEGGPSADNGESDIQHENIIANLLTQYGYTKIIKCYDPGVTPKNIIDAFNGGISLANYTGHGSETAWGTSHFGTTHVKQLTNSNQLPFIFDVACVNGDFLYNVPCFAEALMRAQKDGKPTGTVAIIASTINQSWASPMRGQDEMNEILCEKHPNNIKRTFGGVTMNGMFAMVEKYKKDGEKMLDTWTVFGDPSLLVRTLVPTKMQVTAPANISASAQTFEVACDYNGAIATLSDDGDMVGTAIVKDGKAIIKLNESIADETNLTLTVVGYNKVTVIKDVKVEGTSIADVANDKPYTVAVSGKTITVESPAAGLTIFDMNGRRVATAKNRMVFEAQNGVYAVRIATEGKTYTEKVIVK</sequence>
<comment type="function">
    <text evidence="1 8">Thiol protease. Acts synergistically with RgpA to catalyze the maturation of fimbrial subunits, such as FimA (By similarity). Its proteolytic activity is a major factor in both periodontal tissue destruction and in evasion of host defense mechanisms (Probable).</text>
</comment>
<comment type="catalytic activity">
    <reaction evidence="3 5">
        <text>Hydrolysis of proteins and small molecule substrates, with a preference for Arg in P1.</text>
        <dbReference type="EC" id="3.4.22.37"/>
    </reaction>
</comment>
<comment type="activity regulation">
    <text evidence="3">Inhibited by human histatin-3 1/24 (histatin-5).</text>
</comment>
<comment type="interaction">
    <interactant intactId="EBI-8505881">
        <id>P95493</id>
    </interactant>
    <interactant intactId="EBI-738783">
        <id>P15516</id>
        <label>HTN3</label>
    </interactant>
    <organismsDiffer>true</organismsDiffer>
    <experiments>7</experiments>
</comment>
<comment type="subcellular location">
    <subcellularLocation>
        <location evidence="5">Secreted</location>
    </subcellularLocation>
</comment>
<comment type="similarity">
    <text evidence="8">Belongs to the peptidase C25 family.</text>
</comment>
<evidence type="ECO:0000250" key="1">
    <source>
        <dbReference type="UniProtKB" id="B2RKU0"/>
    </source>
</evidence>
<evidence type="ECO:0000255" key="2"/>
<evidence type="ECO:0000269" key="3">
    <source>
    </source>
</evidence>
<evidence type="ECO:0000269" key="4">
    <source>
    </source>
</evidence>
<evidence type="ECO:0000269" key="5">
    <source>
    </source>
</evidence>
<evidence type="ECO:0000303" key="6">
    <source>
    </source>
</evidence>
<evidence type="ECO:0000303" key="7">
    <source>
    </source>
</evidence>
<evidence type="ECO:0000305" key="8"/>
<evidence type="ECO:0000305" key="9">
    <source>
    </source>
</evidence>
<evidence type="ECO:0007744" key="10">
    <source>
        <dbReference type="PDB" id="1CVR"/>
    </source>
</evidence>
<evidence type="ECO:0007744" key="11">
    <source>
        <dbReference type="PDB" id="4IEF"/>
    </source>
</evidence>
<evidence type="ECO:0007744" key="12">
    <source>
        <dbReference type="PDB" id="5AG8"/>
    </source>
</evidence>
<evidence type="ECO:0007744" key="13">
    <source>
        <dbReference type="PDB" id="5AG9"/>
    </source>
</evidence>
<evidence type="ECO:0007744" key="14">
    <source>
        <dbReference type="PDB" id="5HFS"/>
    </source>
</evidence>
<evidence type="ECO:0007829" key="15">
    <source>
        <dbReference type="PDB" id="1CVR"/>
    </source>
</evidence>
<evidence type="ECO:0007829" key="16">
    <source>
        <dbReference type="PDB" id="4IEF"/>
    </source>
</evidence>
<evidence type="ECO:0007829" key="17">
    <source>
        <dbReference type="PDB" id="5AG8"/>
    </source>
</evidence>
<proteinExistence type="evidence at protein level"/>
<accession>P95493</accession>
<accession>O33441</accession>
<protein>
    <recommendedName>
        <fullName>Gingipain R2</fullName>
        <ecNumber evidence="3 5">3.4.22.37</ecNumber>
    </recommendedName>
    <alternativeName>
        <fullName>Arg-gingipain</fullName>
    </alternativeName>
    <alternativeName>
        <fullName>Gingipain 2</fullName>
    </alternativeName>
    <alternativeName>
        <fullName>RGP-2</fullName>
    </alternativeName>
</protein>
<reference key="1">
    <citation type="journal article" date="1998" name="J. Biol. Chem.">
        <title>Comparative properties of two cysteine proteinases (gingipains R), the products of two related but individual genes of Porphyromonas gingivalis.</title>
        <authorList>
            <person name="Potempa J."/>
            <person name="Mikolajczyk-Pawlinska J."/>
            <person name="Brassell D."/>
            <person name="Nelson D."/>
            <person name="Thoegersen I.B."/>
            <person name="Enghild J.J."/>
            <person name="Travis J."/>
        </authorList>
    </citation>
    <scope>NUCLEOTIDE SEQUENCE [GENOMIC DNA]</scope>
    <scope>PROTEIN SEQUENCE OF 230-651</scope>
    <scope>PROPEPTIDE</scope>
    <scope>SUBCELLULAR LOCATION</scope>
    <scope>CATALYTIC ACTIVITY</scope>
    <source>
        <strain>HG66</strain>
    </source>
</reference>
<reference key="2">
    <citation type="journal article" date="1998" name="Microbiology">
        <title>Characterization of a second cell-associated Arg-specific cysteine proteinase of Porphyromonas gingivalis and identification of an adhesin-binding motif involved in association of the prtR and prtK proteinases and adhesins into large complexes.</title>
        <authorList>
            <person name="Slakeski N."/>
            <person name="Bhogal P.S."/>
            <person name="O'Brien-Simpson N.M."/>
            <person name="Reynolds E.C."/>
        </authorList>
    </citation>
    <scope>NUCLEOTIDE SEQUENCE [GENOMIC DNA]</scope>
    <source>
        <strain>ATCC 53978 / W50</strain>
    </source>
</reference>
<reference key="3">
    <citation type="journal article" date="2003" name="J. Bacteriol.">
        <title>Complete genome sequence of the oral pathogenic bacterium Porphyromonas gingivalis strain W83.</title>
        <authorList>
            <person name="Nelson K.E."/>
            <person name="Fleischmann R.D."/>
            <person name="DeBoy R.T."/>
            <person name="Paulsen I.T."/>
            <person name="Fouts D.E."/>
            <person name="Eisen J.A."/>
            <person name="Daugherty S.C."/>
            <person name="Dodson R.J."/>
            <person name="Durkin A.S."/>
            <person name="Gwinn M.L."/>
            <person name="Haft D.H."/>
            <person name="Kolonay J.F."/>
            <person name="Nelson W.C."/>
            <person name="Mason T.M."/>
            <person name="Tallon L."/>
            <person name="Gray J."/>
            <person name="Granger D."/>
            <person name="Tettelin H."/>
            <person name="Dong H."/>
            <person name="Galvin J.L."/>
            <person name="Duncan M.J."/>
            <person name="Dewhirst F.E."/>
            <person name="Fraser C.M."/>
        </authorList>
    </citation>
    <scope>NUCLEOTIDE SEQUENCE [LARGE SCALE GENOMIC DNA]</scope>
    <source>
        <strain>ATCC BAA-308 / W83</strain>
    </source>
</reference>
<reference key="4">
    <citation type="journal article" date="2001" name="Infect. Immun.">
        <title>Salivary histatin 5 is an inhibitor of both host and bacterial enzymes implicated in periodontal disease.</title>
        <authorList>
            <person name="Gusman H."/>
            <person name="Travis J."/>
            <person name="Helmerhorst E.J."/>
            <person name="Potempa J."/>
            <person name="Troxler R.F."/>
            <person name="Oppenheim F.G."/>
        </authorList>
    </citation>
    <scope>ACTIVITY REGULATION</scope>
    <scope>CATALYTIC ACTIVITY</scope>
</reference>
<reference key="5">
    <citation type="journal article" date="1999" name="EMBO J.">
        <title>Crystal structure of gingipain R: an Arg-specific bacterial cysteine proteinase with a caspase-like fold.</title>
        <authorList>
            <person name="Eichinger A."/>
            <person name="Beisel H.-G."/>
            <person name="Jacob U."/>
            <person name="Huber R."/>
            <person name="Medrano F.-J."/>
            <person name="Banbula A."/>
            <person name="Potempa J."/>
            <person name="Travis J."/>
            <person name="Bode W."/>
        </authorList>
    </citation>
    <scope>X-RAY CRYSTALLOGRAPHY (2.00 ANGSTROMS) OF 230-664</scope>
    <scope>ACTIVE SITE</scope>
</reference>
<reference evidence="11" key="6">
    <citation type="journal article" date="2013" name="J. Biol. Chem.">
        <title>Porphyromonas gingivalis virulence factor gingipain RgpB shows a unique zymogenic mechanism for cysteine peptidases.</title>
        <authorList>
            <person name="de Diego I."/>
            <person name="Veillard F.T."/>
            <person name="Guevara T."/>
            <person name="Potempa B."/>
            <person name="Sztukowska M."/>
            <person name="Potempa J."/>
            <person name="Gomis-Ruth F.X."/>
        </authorList>
    </citation>
    <scope>X-RAY CRYSTALLOGRAPHY (2.30 ANGSTROMS) OF 25-229 AND 230-662 IN COMPLEX WITH CALCIUM</scope>
    <scope>ACTIVE SITE</scope>
    <source>
        <strain evidence="6">ATCC BAA-308 / W83</strain>
    </source>
</reference>
<reference evidence="12 13 14" key="7">
    <citation type="journal article" date="2016" name="Sci. Rep.">
        <title>The outer-membrane export signal of Porphyromonas gingivalis type IX secretion system (T9SS) is a conserved C-terminal beta-sandwich domain.</title>
        <authorList>
            <person name="de Diego I."/>
            <person name="Ksiazek M."/>
            <person name="Mizgalska D."/>
            <person name="Koneru L."/>
            <person name="Golik P."/>
            <person name="Szmigielski B."/>
            <person name="Nowak M."/>
            <person name="Nowakowska Z."/>
            <person name="Potempa B."/>
            <person name="Houston J.A."/>
            <person name="Enghild J.J."/>
            <person name="Thogersen I.B."/>
            <person name="Gao J."/>
            <person name="Kwan A.H."/>
            <person name="Trewhella J."/>
            <person name="Dubin G."/>
            <person name="Gomis-Ruth F.X."/>
            <person name="Nguyen K.A."/>
            <person name="Potempa J."/>
        </authorList>
    </citation>
    <scope>X-RAY CRYSTALLOGRAPHY (1.90 ANGSTROMS) OF 577-736</scope>
    <source>
        <strain evidence="7">ATCC BAA-308 / W83</strain>
    </source>
</reference>